<accession>P28894</accession>
<feature type="chain" id="PRO_0000161259" description="Fumarate hydratase class II 2">
    <location>
        <begin position="1"/>
        <end position="473"/>
    </location>
</feature>
<feature type="region of interest" description="Disordered" evidence="2">
    <location>
        <begin position="1"/>
        <end position="28"/>
    </location>
</feature>
<feature type="active site" description="Proton donor/acceptor" evidence="1">
    <location>
        <position position="198"/>
    </location>
</feature>
<feature type="active site" evidence="1">
    <location>
        <position position="328"/>
    </location>
</feature>
<feature type="binding site" evidence="1">
    <location>
        <begin position="108"/>
        <end position="110"/>
    </location>
    <ligand>
        <name>substrate</name>
    </ligand>
</feature>
<feature type="binding site" description="in site B" evidence="1">
    <location>
        <begin position="139"/>
        <end position="142"/>
    </location>
    <ligand>
        <name>substrate</name>
    </ligand>
</feature>
<feature type="binding site" evidence="1">
    <location>
        <begin position="149"/>
        <end position="151"/>
    </location>
    <ligand>
        <name>substrate</name>
    </ligand>
</feature>
<feature type="binding site" evidence="1">
    <location>
        <position position="197"/>
    </location>
    <ligand>
        <name>substrate</name>
    </ligand>
</feature>
<feature type="binding site" evidence="1">
    <location>
        <position position="329"/>
    </location>
    <ligand>
        <name>substrate</name>
    </ligand>
</feature>
<feature type="binding site" evidence="1">
    <location>
        <begin position="334"/>
        <end position="336"/>
    </location>
    <ligand>
        <name>substrate</name>
    </ligand>
</feature>
<feature type="site" description="Important for catalytic activity" evidence="1">
    <location>
        <position position="341"/>
    </location>
</feature>
<feature type="sequence conflict" description="In Ref. 1; AAA26211/AAA26212." evidence="3" ref="1">
    <original>IDGS</original>
    <variation>STAD</variation>
    <location>
        <begin position="91"/>
        <end position="94"/>
    </location>
</feature>
<feature type="sequence conflict" description="In Ref. 1; AAA26211/AAA26212." evidence="3" ref="1">
    <original>S</original>
    <variation>R</variation>
    <location>
        <position position="220"/>
    </location>
</feature>
<name>FUMC2_BRADU</name>
<keyword id="KW-0963">Cytoplasm</keyword>
<keyword id="KW-0456">Lyase</keyword>
<keyword id="KW-1185">Reference proteome</keyword>
<keyword id="KW-0816">Tricarboxylic acid cycle</keyword>
<gene>
    <name evidence="1" type="primary">fumC2</name>
    <name type="synonym">fumC</name>
    <name type="ordered locus">blr6519</name>
</gene>
<proteinExistence type="inferred from homology"/>
<organism>
    <name type="scientific">Bradyrhizobium diazoefficiens (strain JCM 10833 / BCRC 13528 / IAM 13628 / NBRC 14792 / USDA 110)</name>
    <dbReference type="NCBI Taxonomy" id="224911"/>
    <lineage>
        <taxon>Bacteria</taxon>
        <taxon>Pseudomonadati</taxon>
        <taxon>Pseudomonadota</taxon>
        <taxon>Alphaproteobacteria</taxon>
        <taxon>Hyphomicrobiales</taxon>
        <taxon>Nitrobacteraceae</taxon>
        <taxon>Bradyrhizobium</taxon>
    </lineage>
</organism>
<evidence type="ECO:0000255" key="1">
    <source>
        <dbReference type="HAMAP-Rule" id="MF_00743"/>
    </source>
</evidence>
<evidence type="ECO:0000256" key="2">
    <source>
        <dbReference type="SAM" id="MobiDB-lite"/>
    </source>
</evidence>
<evidence type="ECO:0000305" key="3"/>
<protein>
    <recommendedName>
        <fullName evidence="1">Fumarate hydratase class II 2</fullName>
        <shortName evidence="1">Fumarase C 2</shortName>
        <ecNumber evidence="1">4.2.1.2</ecNumber>
    </recommendedName>
    <alternativeName>
        <fullName evidence="1">Aerobic fumarase 2</fullName>
    </alternativeName>
    <alternativeName>
        <fullName evidence="1">Iron-independent fumarase 2</fullName>
    </alternativeName>
</protein>
<dbReference type="EC" id="4.2.1.2" evidence="1"/>
<dbReference type="EMBL" id="M79457">
    <property type="protein sequence ID" value="AAA26211.1"/>
    <property type="status" value="ALT_INIT"/>
    <property type="molecule type" value="Genomic_DNA"/>
</dbReference>
<dbReference type="EMBL" id="M79457">
    <property type="protein sequence ID" value="AAA26212.1"/>
    <property type="molecule type" value="Genomic_DNA"/>
</dbReference>
<dbReference type="EMBL" id="BA000040">
    <property type="protein sequence ID" value="BAC51784.1"/>
    <property type="status" value="ALT_INIT"/>
    <property type="molecule type" value="Genomic_DNA"/>
</dbReference>
<dbReference type="RefSeq" id="NP_773159.2">
    <property type="nucleotide sequence ID" value="NC_004463.1"/>
</dbReference>
<dbReference type="SMR" id="P28894"/>
<dbReference type="FunCoup" id="P28894">
    <property type="interactions" value="560"/>
</dbReference>
<dbReference type="STRING" id="224911.AAV28_30155"/>
<dbReference type="EnsemblBacteria" id="BAC51784">
    <property type="protein sequence ID" value="BAC51784"/>
    <property type="gene ID" value="BAC51784"/>
</dbReference>
<dbReference type="KEGG" id="bja:blr6519"/>
<dbReference type="PATRIC" id="fig|224911.5.peg.6668"/>
<dbReference type="eggNOG" id="COG0114">
    <property type="taxonomic scope" value="Bacteria"/>
</dbReference>
<dbReference type="HOGENOM" id="CLU_021594_4_1_5"/>
<dbReference type="InParanoid" id="P28894"/>
<dbReference type="OrthoDB" id="9802809at2"/>
<dbReference type="UniPathway" id="UPA00223">
    <property type="reaction ID" value="UER01007"/>
</dbReference>
<dbReference type="Proteomes" id="UP000002526">
    <property type="component" value="Chromosome"/>
</dbReference>
<dbReference type="GO" id="GO:0005737">
    <property type="term" value="C:cytoplasm"/>
    <property type="evidence" value="ECO:0007669"/>
    <property type="project" value="UniProtKB-SubCell"/>
</dbReference>
<dbReference type="GO" id="GO:0004333">
    <property type="term" value="F:fumarate hydratase activity"/>
    <property type="evidence" value="ECO:0000318"/>
    <property type="project" value="GO_Central"/>
</dbReference>
<dbReference type="GO" id="GO:0006106">
    <property type="term" value="P:fumarate metabolic process"/>
    <property type="evidence" value="ECO:0000318"/>
    <property type="project" value="GO_Central"/>
</dbReference>
<dbReference type="GO" id="GO:0006108">
    <property type="term" value="P:malate metabolic process"/>
    <property type="evidence" value="ECO:0000318"/>
    <property type="project" value="GO_Central"/>
</dbReference>
<dbReference type="GO" id="GO:0006099">
    <property type="term" value="P:tricarboxylic acid cycle"/>
    <property type="evidence" value="ECO:0000318"/>
    <property type="project" value="GO_Central"/>
</dbReference>
<dbReference type="CDD" id="cd01362">
    <property type="entry name" value="Fumarase_classII"/>
    <property type="match status" value="1"/>
</dbReference>
<dbReference type="FunFam" id="1.10.40.30:FF:000002">
    <property type="entry name" value="Fumarate hydratase class II"/>
    <property type="match status" value="1"/>
</dbReference>
<dbReference type="FunFam" id="1.10.275.10:FF:000001">
    <property type="entry name" value="Fumarate hydratase, mitochondrial"/>
    <property type="match status" value="1"/>
</dbReference>
<dbReference type="FunFam" id="1.20.200.10:FF:000001">
    <property type="entry name" value="Fumarate hydratase, mitochondrial"/>
    <property type="match status" value="1"/>
</dbReference>
<dbReference type="Gene3D" id="1.10.40.30">
    <property type="entry name" value="Fumarase/aspartase (C-terminal domain)"/>
    <property type="match status" value="1"/>
</dbReference>
<dbReference type="Gene3D" id="1.20.200.10">
    <property type="entry name" value="Fumarase/aspartase (Central domain)"/>
    <property type="match status" value="1"/>
</dbReference>
<dbReference type="Gene3D" id="1.10.275.10">
    <property type="entry name" value="Fumarase/aspartase (N-terminal domain)"/>
    <property type="match status" value="1"/>
</dbReference>
<dbReference type="HAMAP" id="MF_00743">
    <property type="entry name" value="FumaraseC"/>
    <property type="match status" value="1"/>
</dbReference>
<dbReference type="InterPro" id="IPR005677">
    <property type="entry name" value="Fum_hydII"/>
</dbReference>
<dbReference type="InterPro" id="IPR024083">
    <property type="entry name" value="Fumarase/histidase_N"/>
</dbReference>
<dbReference type="InterPro" id="IPR018951">
    <property type="entry name" value="Fumarase_C_C"/>
</dbReference>
<dbReference type="InterPro" id="IPR020557">
    <property type="entry name" value="Fumarate_lyase_CS"/>
</dbReference>
<dbReference type="InterPro" id="IPR000362">
    <property type="entry name" value="Fumarate_lyase_fam"/>
</dbReference>
<dbReference type="InterPro" id="IPR022761">
    <property type="entry name" value="Fumarate_lyase_N"/>
</dbReference>
<dbReference type="InterPro" id="IPR008948">
    <property type="entry name" value="L-Aspartase-like"/>
</dbReference>
<dbReference type="NCBIfam" id="TIGR00979">
    <property type="entry name" value="fumC_II"/>
    <property type="match status" value="1"/>
</dbReference>
<dbReference type="NCBIfam" id="NF008909">
    <property type="entry name" value="PRK12273.1"/>
    <property type="match status" value="1"/>
</dbReference>
<dbReference type="PANTHER" id="PTHR11444">
    <property type="entry name" value="ASPARTATEAMMONIA/ARGININOSUCCINATE/ADENYLOSUCCINATE LYASE"/>
    <property type="match status" value="1"/>
</dbReference>
<dbReference type="PANTHER" id="PTHR11444:SF1">
    <property type="entry name" value="FUMARATE HYDRATASE, MITOCHONDRIAL"/>
    <property type="match status" value="1"/>
</dbReference>
<dbReference type="Pfam" id="PF10415">
    <property type="entry name" value="FumaraseC_C"/>
    <property type="match status" value="1"/>
</dbReference>
<dbReference type="Pfam" id="PF00206">
    <property type="entry name" value="Lyase_1"/>
    <property type="match status" value="1"/>
</dbReference>
<dbReference type="PRINTS" id="PR00149">
    <property type="entry name" value="FUMRATELYASE"/>
</dbReference>
<dbReference type="SUPFAM" id="SSF48557">
    <property type="entry name" value="L-aspartase-like"/>
    <property type="match status" value="1"/>
</dbReference>
<dbReference type="PROSITE" id="PS00163">
    <property type="entry name" value="FUMARATE_LYASES"/>
    <property type="match status" value="1"/>
</dbReference>
<sequence>MAKSARTKTARPATRTETDSFGPIEVPSDRYWGAQTERSRQNFRIGTDRMPISLVHALGIVKLAAAQSNRELGLLDQRRASAIIRAAREVIDGSLDDHFPLVVWQTGSGTQTNMNLNEVIANRANELLGGELGAKKPVHPNDHVNMSQSSNDSFPTAMHIAAASRITADLVPALGELLRALRKKEKEFAKIVKIGRTHTQDATPLTLGQEFSGYAAQVESGIARLKVAVKELYPLAQGGTAVGTGLNAKPRFARLFAKHVAGITKLPFTSAANKFEALASNDAYVLAHGAISSVATGLFKIANDIRLLGSGPRSGLGELILPENEPGSSIMPGKVNPTQCEAMTMVCCQVFGNHTAITVAGSQGHFELNVYKPVLAYNMLHSIRLMADAARSFTEHCVSGIRADEKRISELMQRSLMLVTALAPKIGYDNAAKVAKTAHANGTTLKEEALRLGFVTADEFDRLVQPEKMTKPG</sequence>
<comment type="function">
    <text evidence="1">Involved in the TCA cycle. Catalyzes the stereospecific interconversion of fumarate to L-malate.</text>
</comment>
<comment type="catalytic activity">
    <reaction evidence="1">
        <text>(S)-malate = fumarate + H2O</text>
        <dbReference type="Rhea" id="RHEA:12460"/>
        <dbReference type="ChEBI" id="CHEBI:15377"/>
        <dbReference type="ChEBI" id="CHEBI:15589"/>
        <dbReference type="ChEBI" id="CHEBI:29806"/>
        <dbReference type="EC" id="4.2.1.2"/>
    </reaction>
</comment>
<comment type="pathway">
    <text evidence="1">Carbohydrate metabolism; tricarboxylic acid cycle; (S)-malate from fumarate: step 1/1.</text>
</comment>
<comment type="subunit">
    <text evidence="1">Homotetramer.</text>
</comment>
<comment type="subcellular location">
    <subcellularLocation>
        <location evidence="1">Cytoplasm</location>
    </subcellularLocation>
</comment>
<comment type="miscellaneous">
    <text evidence="1">There are 2 substrate-binding sites: the catalytic A site, and the non-catalytic B site that may play a role in the transfer of substrate or product between the active site and the solvent. Alternatively, the B site may bind allosteric effectors.</text>
</comment>
<comment type="similarity">
    <text evidence="1">Belongs to the class-II fumarase/aspartase family. Fumarase subfamily.</text>
</comment>
<comment type="sequence caution" evidence="3">
    <conflict type="erroneous initiation">
        <sequence resource="EMBL-CDS" id="AAA26211"/>
    </conflict>
    <text>Extended N-terminus.</text>
</comment>
<comment type="sequence caution" evidence="3">
    <conflict type="erroneous initiation">
        <sequence resource="EMBL-CDS" id="BAC51784"/>
    </conflict>
    <text>Extended N-terminus.</text>
</comment>
<reference key="1">
    <citation type="journal article" date="1991" name="J. Gen. Microbiol.">
        <title>Cloning, sequencing, and mutational analysis of the Bradyrhizobium japonicum fumC-like gene: evidence for the existence of two different fumarases.</title>
        <authorList>
            <person name="Acuna G."/>
            <person name="Ebeling S."/>
            <person name="Hennecke H."/>
        </authorList>
    </citation>
    <scope>NUCLEOTIDE SEQUENCE [GENOMIC DNA]</scope>
    <source>
        <strain>USDA 110spc4</strain>
    </source>
</reference>
<reference key="2">
    <citation type="journal article" date="2002" name="DNA Res.">
        <title>Complete genomic sequence of nitrogen-fixing symbiotic bacterium Bradyrhizobium japonicum USDA110.</title>
        <authorList>
            <person name="Kaneko T."/>
            <person name="Nakamura Y."/>
            <person name="Sato S."/>
            <person name="Minamisawa K."/>
            <person name="Uchiumi T."/>
            <person name="Sasamoto S."/>
            <person name="Watanabe A."/>
            <person name="Idesawa K."/>
            <person name="Iriguchi M."/>
            <person name="Kawashima K."/>
            <person name="Kohara M."/>
            <person name="Matsumoto M."/>
            <person name="Shimpo S."/>
            <person name="Tsuruoka H."/>
            <person name="Wada T."/>
            <person name="Yamada M."/>
            <person name="Tabata S."/>
        </authorList>
    </citation>
    <scope>NUCLEOTIDE SEQUENCE [LARGE SCALE GENOMIC DNA]</scope>
    <source>
        <strain>JCM 10833 / BCRC 13528 / IAM 13628 / NBRC 14792 / USDA 110</strain>
    </source>
</reference>